<sequence>MSPAPAATQAPVSVSLFDLSTDAPVLQGLRLVSHFPEEALAQSLQTSCPGSEEQISPERRPFQGALDISEKLFCSTCDQVFQNHQEQREHYKLDWHRFNLKQRLKDKPLLSALDFEKQSSTGDLSSISGSEDSDSDSEEDLQILDEERADLEKPTRPQGFHPHRVLFQNAQGQFLYAYRCVLGPRHASASTYCVVPLEESELLLQNLQTGGPRDCVVLMAAAGHFAGAIFQGREVLTHKTFHRYTVRAKRGTAQGLRDARGAAAHSAGASLRRYNEAALYKEVRDLLAGPAWAKALEEAGTILLRAPRSGRSLFFGGREAPLRRGDPRLWDIPLATRRPTFQELQRVVHKLTTLHIHGEDPRETSRLDLPQTHRKRVRERKVIEEESKVPSDENEALGQNKEAPTQGSESEGGDGSQVELELVEVTLGTLDLREFDVFPKQRRRKRNKRERKQDLESGAQMTLSQQPKEDEALSGSAPLRPPLDEATSPCQSELWDVLLAACRAGDVGMLKDRLTASPLHPGVLPLLSAPLGSGGFTLLHAAAAAGRGSVVRLLLEAGADPTVQDSRARPPYTVAADRSTRNEFRRFMEKNPDAYDYSKAQVPGPLTAEMEARQATRRREQKAARRHREEQQRKQQEQEKQEQEEQQRFAALSDREKRALAAERRLAAQLGALNPQTPDPAITVSNIPRCWSCGMSLQGLVPFHYLDFSFCSTRCLRDHRCQAGKPSS</sequence>
<feature type="chain" id="PRO_0000247277" description="tRNA endonuclease ANKZF1">
    <location>
        <begin position="1"/>
        <end position="728"/>
    </location>
</feature>
<feature type="domain" description="VLRF1" evidence="4">
    <location>
        <begin position="211"/>
        <end position="354"/>
    </location>
</feature>
<feature type="repeat" description="ANK 1">
    <location>
        <begin position="493"/>
        <end position="526"/>
    </location>
</feature>
<feature type="repeat" description="ANK 2">
    <location>
        <begin position="534"/>
        <end position="563"/>
    </location>
</feature>
<feature type="zinc finger region" description="C2H2-type">
    <location>
        <begin position="72"/>
        <end position="96"/>
    </location>
</feature>
<feature type="region of interest" description="Disordered" evidence="5">
    <location>
        <begin position="120"/>
        <end position="140"/>
    </location>
</feature>
<feature type="region of interest" description="Disordered" evidence="5">
    <location>
        <begin position="359"/>
        <end position="416"/>
    </location>
</feature>
<feature type="region of interest" description="Disordered" evidence="5">
    <location>
        <begin position="442"/>
        <end position="487"/>
    </location>
</feature>
<feature type="region of interest" description="Disordered" evidence="5">
    <location>
        <begin position="589"/>
        <end position="656"/>
    </location>
</feature>
<feature type="region of interest" description="VCP/p97-interacting motif (VIM)" evidence="2">
    <location>
        <begin position="654"/>
        <end position="666"/>
    </location>
</feature>
<feature type="coiled-coil region" evidence="3">
    <location>
        <begin position="608"/>
        <end position="659"/>
    </location>
</feature>
<feature type="compositionally biased region" description="Low complexity" evidence="5">
    <location>
        <begin position="120"/>
        <end position="130"/>
    </location>
</feature>
<feature type="compositionally biased region" description="Acidic residues" evidence="5">
    <location>
        <begin position="131"/>
        <end position="140"/>
    </location>
</feature>
<feature type="compositionally biased region" description="Basic and acidic residues" evidence="5">
    <location>
        <begin position="380"/>
        <end position="391"/>
    </location>
</feature>
<feature type="compositionally biased region" description="Basic and acidic residues" evidence="5">
    <location>
        <begin position="610"/>
        <end position="656"/>
    </location>
</feature>
<feature type="active site" evidence="4">
    <location>
        <position position="254"/>
    </location>
</feature>
<feature type="modified residue" description="Phosphoserine" evidence="2">
    <location>
        <position position="266"/>
    </location>
</feature>
<feature type="modified residue" description="Phosphoserine" evidence="2">
    <location>
        <position position="533"/>
    </location>
</feature>
<feature type="modified residue" description="Phosphothreonine" evidence="2">
    <location>
        <position position="607"/>
    </location>
</feature>
<evidence type="ECO:0000250" key="1">
    <source>
        <dbReference type="UniProtKB" id="Q04311"/>
    </source>
</evidence>
<evidence type="ECO:0000250" key="2">
    <source>
        <dbReference type="UniProtKB" id="Q9H8Y5"/>
    </source>
</evidence>
<evidence type="ECO:0000255" key="3"/>
<evidence type="ECO:0000255" key="4">
    <source>
        <dbReference type="PROSITE-ProRule" id="PRU01389"/>
    </source>
</evidence>
<evidence type="ECO:0000256" key="5">
    <source>
        <dbReference type="SAM" id="MobiDB-lite"/>
    </source>
</evidence>
<evidence type="ECO:0000305" key="6"/>
<gene>
    <name type="primary">ANKZF1</name>
</gene>
<protein>
    <recommendedName>
        <fullName evidence="6">tRNA endonuclease ANKZF1</fullName>
        <ecNumber evidence="2">3.1.-.-</ecNumber>
    </recommendedName>
    <alternativeName>
        <fullName evidence="6">Ankyrin repeat and zinc finger domain-containing protein 1</fullName>
    </alternativeName>
</protein>
<proteinExistence type="evidence at transcript level"/>
<keyword id="KW-0040">ANK repeat</keyword>
<keyword id="KW-0175">Coiled coil</keyword>
<keyword id="KW-0963">Cytoplasm</keyword>
<keyword id="KW-0255">Endonuclease</keyword>
<keyword id="KW-0378">Hydrolase</keyword>
<keyword id="KW-0479">Metal-binding</keyword>
<keyword id="KW-0540">Nuclease</keyword>
<keyword id="KW-0597">Phosphoprotein</keyword>
<keyword id="KW-1185">Reference proteome</keyword>
<keyword id="KW-0677">Repeat</keyword>
<keyword id="KW-0862">Zinc</keyword>
<keyword id="KW-0863">Zinc-finger</keyword>
<dbReference type="EC" id="3.1.-.-" evidence="2"/>
<dbReference type="EMBL" id="BT021892">
    <property type="protein sequence ID" value="AAX46739.1"/>
    <property type="status" value="ALT_FRAME"/>
    <property type="molecule type" value="mRNA"/>
</dbReference>
<dbReference type="RefSeq" id="NP_001019668.2">
    <property type="nucleotide sequence ID" value="NM_001024497.3"/>
</dbReference>
<dbReference type="RefSeq" id="XP_005202877.1">
    <property type="nucleotide sequence ID" value="XM_005202820.4"/>
</dbReference>
<dbReference type="SMR" id="Q58CQ5"/>
<dbReference type="FunCoup" id="Q58CQ5">
    <property type="interactions" value="1810"/>
</dbReference>
<dbReference type="STRING" id="9913.ENSBTAP00000037989"/>
<dbReference type="PaxDb" id="9913-ENSBTAP00000037989"/>
<dbReference type="GeneID" id="507867"/>
<dbReference type="KEGG" id="bta:507867"/>
<dbReference type="CTD" id="55139"/>
<dbReference type="VEuPathDB" id="HostDB:ENSBTAG00000020610"/>
<dbReference type="eggNOG" id="KOG2505">
    <property type="taxonomic scope" value="Eukaryota"/>
</dbReference>
<dbReference type="HOGENOM" id="CLU_014293_0_0_1"/>
<dbReference type="InParanoid" id="Q58CQ5"/>
<dbReference type="OMA" id="GPHIFMC"/>
<dbReference type="OrthoDB" id="429841at2759"/>
<dbReference type="TreeFam" id="TF313431"/>
<dbReference type="Proteomes" id="UP000009136">
    <property type="component" value="Chromosome 2"/>
</dbReference>
<dbReference type="Bgee" id="ENSBTAG00000020610">
    <property type="expression patterns" value="Expressed in retina and 106 other cell types or tissues"/>
</dbReference>
<dbReference type="GO" id="GO:0005737">
    <property type="term" value="C:cytoplasm"/>
    <property type="evidence" value="ECO:0000250"/>
    <property type="project" value="UniProtKB"/>
</dbReference>
<dbReference type="GO" id="GO:0140101">
    <property type="term" value="F:catalytic activity, acting on a tRNA"/>
    <property type="evidence" value="ECO:0000250"/>
    <property type="project" value="UniProtKB"/>
</dbReference>
<dbReference type="GO" id="GO:0004521">
    <property type="term" value="F:RNA endonuclease activity"/>
    <property type="evidence" value="ECO:0000250"/>
    <property type="project" value="UniProtKB"/>
</dbReference>
<dbReference type="GO" id="GO:0008270">
    <property type="term" value="F:zinc ion binding"/>
    <property type="evidence" value="ECO:0007669"/>
    <property type="project" value="UniProtKB-KW"/>
</dbReference>
<dbReference type="GO" id="GO:0070301">
    <property type="term" value="P:cellular response to hydrogen peroxide"/>
    <property type="evidence" value="ECO:0000250"/>
    <property type="project" value="UniProtKB"/>
</dbReference>
<dbReference type="GO" id="GO:0036503">
    <property type="term" value="P:ERAD pathway"/>
    <property type="evidence" value="ECO:0000318"/>
    <property type="project" value="GO_Central"/>
</dbReference>
<dbReference type="GO" id="GO:0006515">
    <property type="term" value="P:protein quality control for misfolded or incompletely synthesized proteins"/>
    <property type="evidence" value="ECO:0000250"/>
    <property type="project" value="UniProtKB"/>
</dbReference>
<dbReference type="GO" id="GO:0072344">
    <property type="term" value="P:rescue of stalled ribosome"/>
    <property type="evidence" value="ECO:0000250"/>
    <property type="project" value="UniProtKB"/>
</dbReference>
<dbReference type="FunFam" id="1.25.40.20:FF:000180">
    <property type="entry name" value="Ankyrin repeat and zinc finger domain containing 1"/>
    <property type="match status" value="1"/>
</dbReference>
<dbReference type="Gene3D" id="1.25.40.20">
    <property type="entry name" value="Ankyrin repeat-containing domain"/>
    <property type="match status" value="1"/>
</dbReference>
<dbReference type="InterPro" id="IPR002110">
    <property type="entry name" value="Ankyrin_rpt"/>
</dbReference>
<dbReference type="InterPro" id="IPR036770">
    <property type="entry name" value="Ankyrin_rpt-contain_sf"/>
</dbReference>
<dbReference type="InterPro" id="IPR047139">
    <property type="entry name" value="ANKZ1/VMS1"/>
</dbReference>
<dbReference type="InterPro" id="IPR041540">
    <property type="entry name" value="VATC"/>
</dbReference>
<dbReference type="InterPro" id="IPR041175">
    <property type="entry name" value="VLRF1/Vms1"/>
</dbReference>
<dbReference type="InterPro" id="IPR013087">
    <property type="entry name" value="Znf_C2H2_type"/>
</dbReference>
<dbReference type="PANTHER" id="PTHR16036">
    <property type="entry name" value="ANKYRIN REPEAT AND ZINC FINGER DOMAIN-CONTAINING PROTEIN 1"/>
    <property type="match status" value="1"/>
</dbReference>
<dbReference type="PANTHER" id="PTHR16036:SF2">
    <property type="entry name" value="TRNA ENDONUCLEASE ANKZF1"/>
    <property type="match status" value="1"/>
</dbReference>
<dbReference type="Pfam" id="PF00023">
    <property type="entry name" value="Ank"/>
    <property type="match status" value="1"/>
</dbReference>
<dbReference type="Pfam" id="PF18826">
    <property type="entry name" value="bVLRF1"/>
    <property type="match status" value="1"/>
</dbReference>
<dbReference type="Pfam" id="PF18716">
    <property type="entry name" value="VATC"/>
    <property type="match status" value="1"/>
</dbReference>
<dbReference type="SMART" id="SM00248">
    <property type="entry name" value="ANK"/>
    <property type="match status" value="1"/>
</dbReference>
<dbReference type="SUPFAM" id="SSF48403">
    <property type="entry name" value="Ankyrin repeat"/>
    <property type="match status" value="1"/>
</dbReference>
<dbReference type="PROSITE" id="PS50297">
    <property type="entry name" value="ANK_REP_REGION"/>
    <property type="match status" value="1"/>
</dbReference>
<dbReference type="PROSITE" id="PS50088">
    <property type="entry name" value="ANK_REPEAT"/>
    <property type="match status" value="1"/>
</dbReference>
<dbReference type="PROSITE" id="PS52044">
    <property type="entry name" value="VLRF1"/>
    <property type="match status" value="1"/>
</dbReference>
<dbReference type="PROSITE" id="PS00028">
    <property type="entry name" value="ZINC_FINGER_C2H2_1"/>
    <property type="match status" value="1"/>
</dbReference>
<organism>
    <name type="scientific">Bos taurus</name>
    <name type="common">Bovine</name>
    <dbReference type="NCBI Taxonomy" id="9913"/>
    <lineage>
        <taxon>Eukaryota</taxon>
        <taxon>Metazoa</taxon>
        <taxon>Chordata</taxon>
        <taxon>Craniata</taxon>
        <taxon>Vertebrata</taxon>
        <taxon>Euteleostomi</taxon>
        <taxon>Mammalia</taxon>
        <taxon>Eutheria</taxon>
        <taxon>Laurasiatheria</taxon>
        <taxon>Artiodactyla</taxon>
        <taxon>Ruminantia</taxon>
        <taxon>Pecora</taxon>
        <taxon>Bovidae</taxon>
        <taxon>Bovinae</taxon>
        <taxon>Bos</taxon>
    </lineage>
</organism>
<reference key="1">
    <citation type="journal article" date="2005" name="BMC Genomics">
        <title>Characterization of 954 bovine full-CDS cDNA sequences.</title>
        <authorList>
            <person name="Harhay G.P."/>
            <person name="Sonstegard T.S."/>
            <person name="Keele J.W."/>
            <person name="Heaton M.P."/>
            <person name="Clawson M.L."/>
            <person name="Snelling W.M."/>
            <person name="Wiedmann R.T."/>
            <person name="Van Tassell C.P."/>
            <person name="Smith T.P.L."/>
        </authorList>
    </citation>
    <scope>NUCLEOTIDE SEQUENCE [LARGE SCALE MRNA]</scope>
</reference>
<accession>Q58CQ5</accession>
<name>ANKZ1_BOVIN</name>
<comment type="function">
    <text evidence="2">Endonuclease that cleaves polypeptidyl-tRNAs downstream of the ribosome-associated quality control (RQC) pathway to release incompletely synthesized polypeptides for degradation. The RQC pathway disassembles aberrantly stalled translation complexes to recycle or degrade the constituent parts. ANKZF1 acts downstream disassembly of stalled ribosomes and specifically cleaves off the terminal 3'-CCA nucleotides universal to all tRNAs from polypeptidyl-tRNAs, releasing (1) ubiquitinated polypeptides from 60S ribosomal subunit for degradation and (2) cleaved tRNAs. ANKZF1-cleaved tRNAs are then repaired and recycled by ELAC1 and TRNT1. Also plays a role in the cellular response to hydrogen peroxide and in the maintenance of mitochondrial integrity under conditions of cellular stress.</text>
</comment>
<comment type="subunit">
    <text evidence="2">Interacts (via VIM motif) with VCP.</text>
</comment>
<comment type="subcellular location">
    <subcellularLocation>
        <location evidence="2">Cytoplasm</location>
    </subcellularLocation>
    <text evidence="2">Translocates to the mitochondria upon exposure to hydrogen peroxide.</text>
</comment>
<comment type="domain">
    <text evidence="1 4">The VLRF1 domain mediates binding to the 60S ribosomal subunit.</text>
</comment>
<comment type="similarity">
    <text evidence="4 6">Belongs to the ANKZF1/VMS1 family.</text>
</comment>
<comment type="sequence caution" evidence="6">
    <conflict type="frameshift">
        <sequence resource="EMBL-CDS" id="AAX46739"/>
    </conflict>
</comment>